<comment type="function">
    <text evidence="1">Involved in protein export. Acts as a chaperone by maintaining the newly synthesized protein in an open conformation. Functions as a peptidyl-prolyl cis-trans isomerase.</text>
</comment>
<comment type="catalytic activity">
    <reaction evidence="1">
        <text>[protein]-peptidylproline (omega=180) = [protein]-peptidylproline (omega=0)</text>
        <dbReference type="Rhea" id="RHEA:16237"/>
        <dbReference type="Rhea" id="RHEA-COMP:10747"/>
        <dbReference type="Rhea" id="RHEA-COMP:10748"/>
        <dbReference type="ChEBI" id="CHEBI:83833"/>
        <dbReference type="ChEBI" id="CHEBI:83834"/>
        <dbReference type="EC" id="5.2.1.8"/>
    </reaction>
</comment>
<comment type="subcellular location">
    <subcellularLocation>
        <location>Cytoplasm</location>
    </subcellularLocation>
    <text evidence="1">About half TF is bound to the ribosome near the polypeptide exit tunnel while the other half is free in the cytoplasm.</text>
</comment>
<comment type="domain">
    <text evidence="1">Consists of 3 domains; the N-terminus binds the ribosome, the middle domain has PPIase activity, while the C-terminus has intrinsic chaperone activity on its own.</text>
</comment>
<comment type="similarity">
    <text evidence="1">Belongs to the FKBP-type PPIase family. Tig subfamily.</text>
</comment>
<gene>
    <name evidence="1" type="primary">tig</name>
    <name type="ordered locus">Ccel_0809</name>
</gene>
<keyword id="KW-0131">Cell cycle</keyword>
<keyword id="KW-0132">Cell division</keyword>
<keyword id="KW-0143">Chaperone</keyword>
<keyword id="KW-0963">Cytoplasm</keyword>
<keyword id="KW-0413">Isomerase</keyword>
<keyword id="KW-1185">Reference proteome</keyword>
<keyword id="KW-0697">Rotamase</keyword>
<reference key="1">
    <citation type="submission" date="2009-01" db="EMBL/GenBank/DDBJ databases">
        <title>Complete sequence of Clostridium cellulolyticum H10.</title>
        <authorList>
            <consortium name="US DOE Joint Genome Institute"/>
            <person name="Lucas S."/>
            <person name="Copeland A."/>
            <person name="Lapidus A."/>
            <person name="Glavina del Rio T."/>
            <person name="Dalin E."/>
            <person name="Tice H."/>
            <person name="Bruce D."/>
            <person name="Goodwin L."/>
            <person name="Pitluck S."/>
            <person name="Chertkov O."/>
            <person name="Saunders E."/>
            <person name="Brettin T."/>
            <person name="Detter J.C."/>
            <person name="Han C."/>
            <person name="Larimer F."/>
            <person name="Land M."/>
            <person name="Hauser L."/>
            <person name="Kyrpides N."/>
            <person name="Ivanova N."/>
            <person name="Zhou J."/>
            <person name="Richardson P."/>
        </authorList>
    </citation>
    <scope>NUCLEOTIDE SEQUENCE [LARGE SCALE GENOMIC DNA]</scope>
    <source>
        <strain>ATCC 35319 / DSM 5812 / JCM 6584 / H10</strain>
    </source>
</reference>
<organism>
    <name type="scientific">Ruminiclostridium cellulolyticum (strain ATCC 35319 / DSM 5812 / JCM 6584 / H10)</name>
    <name type="common">Clostridium cellulolyticum</name>
    <dbReference type="NCBI Taxonomy" id="394503"/>
    <lineage>
        <taxon>Bacteria</taxon>
        <taxon>Bacillati</taxon>
        <taxon>Bacillota</taxon>
        <taxon>Clostridia</taxon>
        <taxon>Eubacteriales</taxon>
        <taxon>Oscillospiraceae</taxon>
        <taxon>Ruminiclostridium</taxon>
    </lineage>
</organism>
<name>TIG_RUMCH</name>
<sequence>MKVKVENVEKNVVQLEIEVDTAKFEEGMQQSYLKNVKKFNVPGFRKGKAPRNIIERYYGEQALYDDAINIVCSEAYDNAIEENNINPVDRPEIDIVQIGKNQNLIFTAKVTVKPEVELGAYMGVEAKKAEANVTDEDLENEFNKVVEKNARLVSVTDRPIQSGDTAVIDFEGFIDSVPFEGGKGEDYSLVIGSGTFIPGFEDQLIGKNIADDVDVNVSFPEEYGKEELNGKEALFKVLIKEIKVKELPTVDDEFAKDISEFDTLEEYKNDLRNKLEESAKSKAERDNEESVIQAVVGNATVDIPNVMVEKHIDAMARDFDMRLRYQGLDLQRYLEIMGTDFEGFREQFRERAANEVKIQLVIEKISKVENVEATDADVEEEITKTAEAYKQPVEELKKTLRPEDLEYVKNDIAFRKTIKILVDNAKLN</sequence>
<accession>B8I8F4</accession>
<protein>
    <recommendedName>
        <fullName evidence="1">Trigger factor</fullName>
        <shortName evidence="1">TF</shortName>
        <ecNumber evidence="1">5.2.1.8</ecNumber>
    </recommendedName>
    <alternativeName>
        <fullName evidence="1">PPIase</fullName>
    </alternativeName>
</protein>
<dbReference type="EC" id="5.2.1.8" evidence="1"/>
<dbReference type="EMBL" id="CP001348">
    <property type="protein sequence ID" value="ACL75187.1"/>
    <property type="molecule type" value="Genomic_DNA"/>
</dbReference>
<dbReference type="RefSeq" id="WP_015924349.1">
    <property type="nucleotide sequence ID" value="NC_011898.1"/>
</dbReference>
<dbReference type="SMR" id="B8I8F4"/>
<dbReference type="STRING" id="394503.Ccel_0809"/>
<dbReference type="KEGG" id="cce:Ccel_0809"/>
<dbReference type="eggNOG" id="COG0544">
    <property type="taxonomic scope" value="Bacteria"/>
</dbReference>
<dbReference type="HOGENOM" id="CLU_033058_3_2_9"/>
<dbReference type="OrthoDB" id="9767721at2"/>
<dbReference type="Proteomes" id="UP000001349">
    <property type="component" value="Chromosome"/>
</dbReference>
<dbReference type="GO" id="GO:0005737">
    <property type="term" value="C:cytoplasm"/>
    <property type="evidence" value="ECO:0007669"/>
    <property type="project" value="UniProtKB-SubCell"/>
</dbReference>
<dbReference type="GO" id="GO:0003755">
    <property type="term" value="F:peptidyl-prolyl cis-trans isomerase activity"/>
    <property type="evidence" value="ECO:0007669"/>
    <property type="project" value="UniProtKB-UniRule"/>
</dbReference>
<dbReference type="GO" id="GO:0044183">
    <property type="term" value="F:protein folding chaperone"/>
    <property type="evidence" value="ECO:0007669"/>
    <property type="project" value="TreeGrafter"/>
</dbReference>
<dbReference type="GO" id="GO:0043022">
    <property type="term" value="F:ribosome binding"/>
    <property type="evidence" value="ECO:0007669"/>
    <property type="project" value="TreeGrafter"/>
</dbReference>
<dbReference type="GO" id="GO:0051083">
    <property type="term" value="P:'de novo' cotranslational protein folding"/>
    <property type="evidence" value="ECO:0007669"/>
    <property type="project" value="TreeGrafter"/>
</dbReference>
<dbReference type="GO" id="GO:0051301">
    <property type="term" value="P:cell division"/>
    <property type="evidence" value="ECO:0007669"/>
    <property type="project" value="UniProtKB-KW"/>
</dbReference>
<dbReference type="GO" id="GO:0061077">
    <property type="term" value="P:chaperone-mediated protein folding"/>
    <property type="evidence" value="ECO:0007669"/>
    <property type="project" value="TreeGrafter"/>
</dbReference>
<dbReference type="GO" id="GO:0015031">
    <property type="term" value="P:protein transport"/>
    <property type="evidence" value="ECO:0007669"/>
    <property type="project" value="UniProtKB-UniRule"/>
</dbReference>
<dbReference type="GO" id="GO:0043335">
    <property type="term" value="P:protein unfolding"/>
    <property type="evidence" value="ECO:0007669"/>
    <property type="project" value="TreeGrafter"/>
</dbReference>
<dbReference type="FunFam" id="3.10.50.40:FF:000001">
    <property type="entry name" value="Trigger factor"/>
    <property type="match status" value="1"/>
</dbReference>
<dbReference type="Gene3D" id="3.10.50.40">
    <property type="match status" value="1"/>
</dbReference>
<dbReference type="Gene3D" id="3.30.70.1050">
    <property type="entry name" value="Trigger factor ribosome-binding domain"/>
    <property type="match status" value="1"/>
</dbReference>
<dbReference type="Gene3D" id="1.10.3120.10">
    <property type="entry name" value="Trigger factor, C-terminal domain"/>
    <property type="match status" value="1"/>
</dbReference>
<dbReference type="HAMAP" id="MF_00303">
    <property type="entry name" value="Trigger_factor_Tig"/>
    <property type="match status" value="1"/>
</dbReference>
<dbReference type="InterPro" id="IPR046357">
    <property type="entry name" value="PPIase_dom_sf"/>
</dbReference>
<dbReference type="InterPro" id="IPR001179">
    <property type="entry name" value="PPIase_FKBP_dom"/>
</dbReference>
<dbReference type="InterPro" id="IPR005215">
    <property type="entry name" value="Trig_fac"/>
</dbReference>
<dbReference type="InterPro" id="IPR008880">
    <property type="entry name" value="Trigger_fac_C"/>
</dbReference>
<dbReference type="InterPro" id="IPR037041">
    <property type="entry name" value="Trigger_fac_C_sf"/>
</dbReference>
<dbReference type="InterPro" id="IPR008881">
    <property type="entry name" value="Trigger_fac_ribosome-bd_bac"/>
</dbReference>
<dbReference type="InterPro" id="IPR036611">
    <property type="entry name" value="Trigger_fac_ribosome-bd_sf"/>
</dbReference>
<dbReference type="InterPro" id="IPR027304">
    <property type="entry name" value="Trigger_fact/SurA_dom_sf"/>
</dbReference>
<dbReference type="NCBIfam" id="TIGR00115">
    <property type="entry name" value="tig"/>
    <property type="match status" value="1"/>
</dbReference>
<dbReference type="PANTHER" id="PTHR30560">
    <property type="entry name" value="TRIGGER FACTOR CHAPERONE AND PEPTIDYL-PROLYL CIS/TRANS ISOMERASE"/>
    <property type="match status" value="1"/>
</dbReference>
<dbReference type="PANTHER" id="PTHR30560:SF3">
    <property type="entry name" value="TRIGGER FACTOR-LIKE PROTEIN TIG, CHLOROPLASTIC"/>
    <property type="match status" value="1"/>
</dbReference>
<dbReference type="Pfam" id="PF00254">
    <property type="entry name" value="FKBP_C"/>
    <property type="match status" value="1"/>
</dbReference>
<dbReference type="Pfam" id="PF05698">
    <property type="entry name" value="Trigger_C"/>
    <property type="match status" value="1"/>
</dbReference>
<dbReference type="Pfam" id="PF05697">
    <property type="entry name" value="Trigger_N"/>
    <property type="match status" value="1"/>
</dbReference>
<dbReference type="PIRSF" id="PIRSF003095">
    <property type="entry name" value="Trigger_factor"/>
    <property type="match status" value="1"/>
</dbReference>
<dbReference type="SUPFAM" id="SSF54534">
    <property type="entry name" value="FKBP-like"/>
    <property type="match status" value="1"/>
</dbReference>
<dbReference type="SUPFAM" id="SSF109998">
    <property type="entry name" value="Triger factor/SurA peptide-binding domain-like"/>
    <property type="match status" value="1"/>
</dbReference>
<dbReference type="SUPFAM" id="SSF102735">
    <property type="entry name" value="Trigger factor ribosome-binding domain"/>
    <property type="match status" value="1"/>
</dbReference>
<dbReference type="PROSITE" id="PS50059">
    <property type="entry name" value="FKBP_PPIASE"/>
    <property type="match status" value="1"/>
</dbReference>
<evidence type="ECO:0000255" key="1">
    <source>
        <dbReference type="HAMAP-Rule" id="MF_00303"/>
    </source>
</evidence>
<proteinExistence type="inferred from homology"/>
<feature type="chain" id="PRO_1000198151" description="Trigger factor">
    <location>
        <begin position="1"/>
        <end position="428"/>
    </location>
</feature>
<feature type="domain" description="PPIase FKBP-type" evidence="1">
    <location>
        <begin position="163"/>
        <end position="248"/>
    </location>
</feature>